<accession>B7HKX2</accession>
<feature type="chain" id="PRO_1000186177" description="Purine nucleoside phosphorylase DeoD-type">
    <location>
        <begin position="1"/>
        <end position="235"/>
    </location>
</feature>
<feature type="active site" description="Proton donor" evidence="2">
    <location>
        <position position="204"/>
    </location>
</feature>
<feature type="binding site" evidence="1">
    <location>
        <position position="4"/>
    </location>
    <ligand>
        <name>a purine D-ribonucleoside</name>
        <dbReference type="ChEBI" id="CHEBI:142355"/>
        <note>ligand shared between dimeric partners</note>
    </ligand>
</feature>
<feature type="binding site" description="in other chain" evidence="1">
    <location>
        <position position="20"/>
    </location>
    <ligand>
        <name>phosphate</name>
        <dbReference type="ChEBI" id="CHEBI:43474"/>
        <note>ligand shared between dimeric partners</note>
    </ligand>
</feature>
<feature type="binding site" description="in other chain" evidence="1">
    <location>
        <position position="24"/>
    </location>
    <ligand>
        <name>phosphate</name>
        <dbReference type="ChEBI" id="CHEBI:43474"/>
        <note>ligand shared between dimeric partners</note>
    </ligand>
</feature>
<feature type="binding site" evidence="1">
    <location>
        <position position="43"/>
    </location>
    <ligand>
        <name>phosphate</name>
        <dbReference type="ChEBI" id="CHEBI:43474"/>
        <note>ligand shared between dimeric partners</note>
    </ligand>
</feature>
<feature type="binding site" description="in other chain" evidence="1">
    <location>
        <begin position="87"/>
        <end position="90"/>
    </location>
    <ligand>
        <name>phosphate</name>
        <dbReference type="ChEBI" id="CHEBI:43474"/>
        <note>ligand shared between dimeric partners</note>
    </ligand>
</feature>
<feature type="binding site" description="in other chain" evidence="1">
    <location>
        <position position="162"/>
    </location>
    <ligand>
        <name>a purine D-ribonucleoside</name>
        <dbReference type="ChEBI" id="CHEBI:142355"/>
        <note>ligand shared between dimeric partners</note>
    </ligand>
</feature>
<feature type="binding site" description="in other chain" evidence="1">
    <location>
        <begin position="179"/>
        <end position="181"/>
    </location>
    <ligand>
        <name>a purine D-ribonucleoside</name>
        <dbReference type="ChEBI" id="CHEBI:142355"/>
        <note>ligand shared between dimeric partners</note>
    </ligand>
</feature>
<feature type="binding site" description="in other chain" evidence="1">
    <location>
        <begin position="203"/>
        <end position="204"/>
    </location>
    <ligand>
        <name>a purine D-ribonucleoside</name>
        <dbReference type="ChEBI" id="CHEBI:142355"/>
        <note>ligand shared between dimeric partners</note>
    </ligand>
</feature>
<feature type="site" description="Important for catalytic activity" evidence="2">
    <location>
        <position position="217"/>
    </location>
</feature>
<protein>
    <recommendedName>
        <fullName evidence="2">Purine nucleoside phosphorylase DeoD-type</fullName>
        <shortName evidence="2">PNP</shortName>
        <ecNumber evidence="2">2.4.2.1</ecNumber>
    </recommendedName>
</protein>
<organism>
    <name type="scientific">Bacillus cereus (strain AH187)</name>
    <dbReference type="NCBI Taxonomy" id="405534"/>
    <lineage>
        <taxon>Bacteria</taxon>
        <taxon>Bacillati</taxon>
        <taxon>Bacillota</taxon>
        <taxon>Bacilli</taxon>
        <taxon>Bacillales</taxon>
        <taxon>Bacillaceae</taxon>
        <taxon>Bacillus</taxon>
        <taxon>Bacillus cereus group</taxon>
    </lineage>
</organism>
<evidence type="ECO:0000250" key="1">
    <source>
        <dbReference type="UniProtKB" id="P50389"/>
    </source>
</evidence>
<evidence type="ECO:0000255" key="2">
    <source>
        <dbReference type="HAMAP-Rule" id="MF_01627"/>
    </source>
</evidence>
<gene>
    <name evidence="2" type="primary">deoD</name>
    <name type="ordered locus">BCAH187_A1624</name>
</gene>
<comment type="function">
    <text evidence="2">Catalyzes the reversible phosphorolytic breakdown of the N-glycosidic bond in the beta-(deoxy)ribonucleoside molecules, with the formation of the corresponding free purine bases and pentose-1-phosphate.</text>
</comment>
<comment type="catalytic activity">
    <reaction evidence="2">
        <text>a purine D-ribonucleoside + phosphate = a purine nucleobase + alpha-D-ribose 1-phosphate</text>
        <dbReference type="Rhea" id="RHEA:19805"/>
        <dbReference type="ChEBI" id="CHEBI:26386"/>
        <dbReference type="ChEBI" id="CHEBI:43474"/>
        <dbReference type="ChEBI" id="CHEBI:57720"/>
        <dbReference type="ChEBI" id="CHEBI:142355"/>
        <dbReference type="EC" id="2.4.2.1"/>
    </reaction>
</comment>
<comment type="catalytic activity">
    <reaction evidence="2">
        <text>a purine 2'-deoxy-D-ribonucleoside + phosphate = a purine nucleobase + 2-deoxy-alpha-D-ribose 1-phosphate</text>
        <dbReference type="Rhea" id="RHEA:36431"/>
        <dbReference type="ChEBI" id="CHEBI:26386"/>
        <dbReference type="ChEBI" id="CHEBI:43474"/>
        <dbReference type="ChEBI" id="CHEBI:57259"/>
        <dbReference type="ChEBI" id="CHEBI:142361"/>
        <dbReference type="EC" id="2.4.2.1"/>
    </reaction>
</comment>
<comment type="subunit">
    <text evidence="2">Homohexamer; trimer of homodimers.</text>
</comment>
<comment type="similarity">
    <text evidence="2">Belongs to the PNP/UDP phosphorylase family.</text>
</comment>
<name>DEOD_BACC7</name>
<dbReference type="EC" id="2.4.2.1" evidence="2"/>
<dbReference type="EMBL" id="CP001177">
    <property type="protein sequence ID" value="ACJ79501.1"/>
    <property type="molecule type" value="Genomic_DNA"/>
</dbReference>
<dbReference type="SMR" id="B7HKX2"/>
<dbReference type="KEGG" id="bcr:BCAH187_A1624"/>
<dbReference type="HOGENOM" id="CLU_068457_2_0_9"/>
<dbReference type="Proteomes" id="UP000002214">
    <property type="component" value="Chromosome"/>
</dbReference>
<dbReference type="GO" id="GO:0005829">
    <property type="term" value="C:cytosol"/>
    <property type="evidence" value="ECO:0007669"/>
    <property type="project" value="TreeGrafter"/>
</dbReference>
<dbReference type="GO" id="GO:0004731">
    <property type="term" value="F:purine-nucleoside phosphorylase activity"/>
    <property type="evidence" value="ECO:0007669"/>
    <property type="project" value="UniProtKB-UniRule"/>
</dbReference>
<dbReference type="GO" id="GO:0006152">
    <property type="term" value="P:purine nucleoside catabolic process"/>
    <property type="evidence" value="ECO:0007669"/>
    <property type="project" value="TreeGrafter"/>
</dbReference>
<dbReference type="CDD" id="cd09006">
    <property type="entry name" value="PNP_EcPNPI-like"/>
    <property type="match status" value="1"/>
</dbReference>
<dbReference type="Gene3D" id="3.40.50.1580">
    <property type="entry name" value="Nucleoside phosphorylase domain"/>
    <property type="match status" value="1"/>
</dbReference>
<dbReference type="HAMAP" id="MF_01627">
    <property type="entry name" value="Pur_nucleosid_phosp"/>
    <property type="match status" value="1"/>
</dbReference>
<dbReference type="InterPro" id="IPR004402">
    <property type="entry name" value="DeoD-type"/>
</dbReference>
<dbReference type="InterPro" id="IPR018016">
    <property type="entry name" value="Nucleoside_phosphorylase_CS"/>
</dbReference>
<dbReference type="InterPro" id="IPR000845">
    <property type="entry name" value="Nucleoside_phosphorylase_d"/>
</dbReference>
<dbReference type="InterPro" id="IPR035994">
    <property type="entry name" value="Nucleoside_phosphorylase_sf"/>
</dbReference>
<dbReference type="NCBIfam" id="TIGR00107">
    <property type="entry name" value="deoD"/>
    <property type="match status" value="1"/>
</dbReference>
<dbReference type="NCBIfam" id="NF004489">
    <property type="entry name" value="PRK05819.1"/>
    <property type="match status" value="1"/>
</dbReference>
<dbReference type="NCBIfam" id="NF009914">
    <property type="entry name" value="PRK13374.1"/>
    <property type="match status" value="1"/>
</dbReference>
<dbReference type="PANTHER" id="PTHR43691:SF11">
    <property type="entry name" value="FI09636P-RELATED"/>
    <property type="match status" value="1"/>
</dbReference>
<dbReference type="PANTHER" id="PTHR43691">
    <property type="entry name" value="URIDINE PHOSPHORYLASE"/>
    <property type="match status" value="1"/>
</dbReference>
<dbReference type="Pfam" id="PF01048">
    <property type="entry name" value="PNP_UDP_1"/>
    <property type="match status" value="1"/>
</dbReference>
<dbReference type="SUPFAM" id="SSF53167">
    <property type="entry name" value="Purine and uridine phosphorylases"/>
    <property type="match status" value="1"/>
</dbReference>
<dbReference type="PROSITE" id="PS01232">
    <property type="entry name" value="PNP_UDP_1"/>
    <property type="match status" value="1"/>
</dbReference>
<sequence length="235" mass="25675">MSVHIEAKQGEIAESILLPGDPLRAKYIAETFLEDVTCYNNVRGMLGFTGTYKGKRVSVQGTGMGVPSISIYVNELIQSYGVKNLIRVGTCGAIQKDVKVRDVIIAMTACTDSNMNRLTFPGFDFAPAANFDLLKKAYDAGTEKGLHVRVGNVLTADVFYRESMDMVKKLGDYGVLAVEMETTALYTLAAKYGVNALSVLTVSDHIFTGEETTSEERQTTFNEMIEIALDAAIQQ</sequence>
<proteinExistence type="inferred from homology"/>
<keyword id="KW-0328">Glycosyltransferase</keyword>
<keyword id="KW-0808">Transferase</keyword>
<reference key="1">
    <citation type="submission" date="2008-10" db="EMBL/GenBank/DDBJ databases">
        <title>Genome sequence of Bacillus cereus AH187.</title>
        <authorList>
            <person name="Dodson R.J."/>
            <person name="Durkin A.S."/>
            <person name="Rosovitz M.J."/>
            <person name="Rasko D.A."/>
            <person name="Kolsto A.B."/>
            <person name="Okstad O.A."/>
            <person name="Ravel J."/>
            <person name="Sutton G."/>
        </authorList>
    </citation>
    <scope>NUCLEOTIDE SEQUENCE [LARGE SCALE GENOMIC DNA]</scope>
    <source>
        <strain>AH187</strain>
    </source>
</reference>